<sequence>MAEAVLIDLSGLQLNAQKNCHETLLETLDGIHYHHAPKAKFLCIICCRNASKEKDGEYGLCELEAGNGFSRLAGKFETVSHPCLAASLYTIKQKIDEENLSCIKVIVPEHRKLLMKAYVGQLFTEVYEFEFEDLQGAWRDSLLKPSTGINVTTTQELEDIQHEIETYLRSLPALKGDLTIVTSPLIPDNFLHGFTTRTGGISSVPTLSSLNLFSSSKRRDPKVVVQENVRRLANAAGFNAEKFYRIKTDHASEVWVMGKKEPESYDGIVTNQRGVTITALGADCIPIVFADPVKKACGVAHSGWKGTLLGVAMATVNAMIAEYGCDVEDIIVVLGPSVGSCCFTLPKESAVSFHSLHPSCVRHFDSPRPYVDIRKATRILLERGGILPQNIQDQKEDLDLCTSCHPEKFFSHVRDGLNFGTQIGFISLRE</sequence>
<name>LACC1_MOUSE</name>
<organism>
    <name type="scientific">Mus musculus</name>
    <name type="common">Mouse</name>
    <dbReference type="NCBI Taxonomy" id="10090"/>
    <lineage>
        <taxon>Eukaryota</taxon>
        <taxon>Metazoa</taxon>
        <taxon>Chordata</taxon>
        <taxon>Craniata</taxon>
        <taxon>Vertebrata</taxon>
        <taxon>Euteleostomi</taxon>
        <taxon>Mammalia</taxon>
        <taxon>Eutheria</taxon>
        <taxon>Euarchontoglires</taxon>
        <taxon>Glires</taxon>
        <taxon>Rodentia</taxon>
        <taxon>Myomorpha</taxon>
        <taxon>Muroidea</taxon>
        <taxon>Muridae</taxon>
        <taxon>Murinae</taxon>
        <taxon>Mus</taxon>
        <taxon>Mus</taxon>
    </lineage>
</organism>
<comment type="function">
    <text evidence="2 3 5">Purine nucleoside enzyme that catalyzes the phosphorolysis of adenosine, guanosine and inosine nucleosides, yielding D-ribose 1-phosphate and the respective free bases, adenine, guanine and hypoxanthine (By similarity). Also catalyzes the phosphorolysis of S-methyl-5'-thioadenosine into adenine and S-methyl-5-thio-alpha-D-ribose 1-phosphate (By similarity). Also has adenosine deaminase activity (By similarity). Acts as a regulator of innate immunity in macrophages by modulating the purine nucleotide metabolism, thereby regulating the metabolic function and bioenergetic state of macrophages (PubMed:27478939, PubMed:31978345). Enables a purine nucleotide cycle between adenosine and inosine monophosphate and adenylosuccinate that prevents cytoplasmic acidification and balances the cytoplasmic-mitochondrial redox interface (PubMed:31978345). The purine nucleotide cycle consumes aspartate and releases fumarate in a manner involving fatty acid oxidation and ATP-citrate lyase activity (PubMed:31978345). Participates in pattern recognition receptor-induced cytokines in macrophages: associates with the NOD2-signaling complex and promotes optimal NOD2-induced signaling, cytokine secretion and bacterial clearance (By similarity). Localizes to the endoplasmic reticulum upon PRR stimulation of macrophages and associates with endoplasmic reticulum-stress sensors, promoting the endoplasmic reticulum unfolded protein response (UPR) (By similarity). Does not show laccase activity (By similarity).</text>
</comment>
<comment type="catalytic activity">
    <reaction evidence="2">
        <text>adenosine + phosphate = alpha-D-ribose 1-phosphate + adenine</text>
        <dbReference type="Rhea" id="RHEA:27642"/>
        <dbReference type="ChEBI" id="CHEBI:16335"/>
        <dbReference type="ChEBI" id="CHEBI:16708"/>
        <dbReference type="ChEBI" id="CHEBI:43474"/>
        <dbReference type="ChEBI" id="CHEBI:57720"/>
        <dbReference type="EC" id="2.4.2.1"/>
    </reaction>
    <physiologicalReaction direction="left-to-right" evidence="2">
        <dbReference type="Rhea" id="RHEA:27643"/>
    </physiologicalReaction>
</comment>
<comment type="catalytic activity">
    <reaction evidence="2">
        <text>inosine + phosphate = alpha-D-ribose 1-phosphate + hypoxanthine</text>
        <dbReference type="Rhea" id="RHEA:27646"/>
        <dbReference type="ChEBI" id="CHEBI:17368"/>
        <dbReference type="ChEBI" id="CHEBI:17596"/>
        <dbReference type="ChEBI" id="CHEBI:43474"/>
        <dbReference type="ChEBI" id="CHEBI:57720"/>
        <dbReference type="EC" id="2.4.2.1"/>
    </reaction>
    <physiologicalReaction direction="left-to-right" evidence="2">
        <dbReference type="Rhea" id="RHEA:27647"/>
    </physiologicalReaction>
</comment>
<comment type="catalytic activity">
    <reaction evidence="2">
        <text>guanosine + phosphate = alpha-D-ribose 1-phosphate + guanine</text>
        <dbReference type="Rhea" id="RHEA:13233"/>
        <dbReference type="ChEBI" id="CHEBI:16235"/>
        <dbReference type="ChEBI" id="CHEBI:16750"/>
        <dbReference type="ChEBI" id="CHEBI:43474"/>
        <dbReference type="ChEBI" id="CHEBI:57720"/>
        <dbReference type="EC" id="2.4.2.1"/>
    </reaction>
    <physiologicalReaction direction="left-to-right" evidence="2">
        <dbReference type="Rhea" id="RHEA:13234"/>
    </physiologicalReaction>
</comment>
<comment type="catalytic activity">
    <reaction evidence="2">
        <text>S-methyl-5'-thioadenosine + phosphate = 5-(methylsulfanyl)-alpha-D-ribose 1-phosphate + adenine</text>
        <dbReference type="Rhea" id="RHEA:11852"/>
        <dbReference type="ChEBI" id="CHEBI:16708"/>
        <dbReference type="ChEBI" id="CHEBI:17509"/>
        <dbReference type="ChEBI" id="CHEBI:43474"/>
        <dbReference type="ChEBI" id="CHEBI:58533"/>
        <dbReference type="EC" id="2.4.2.28"/>
    </reaction>
    <physiologicalReaction direction="left-to-right" evidence="2">
        <dbReference type="Rhea" id="RHEA:11853"/>
    </physiologicalReaction>
</comment>
<comment type="catalytic activity">
    <reaction evidence="2">
        <text>adenosine + H2O + H(+) = inosine + NH4(+)</text>
        <dbReference type="Rhea" id="RHEA:24408"/>
        <dbReference type="ChEBI" id="CHEBI:15377"/>
        <dbReference type="ChEBI" id="CHEBI:15378"/>
        <dbReference type="ChEBI" id="CHEBI:16335"/>
        <dbReference type="ChEBI" id="CHEBI:17596"/>
        <dbReference type="ChEBI" id="CHEBI:28938"/>
        <dbReference type="EC" id="3.5.4.4"/>
    </reaction>
    <physiologicalReaction direction="left-to-right" evidence="2">
        <dbReference type="Rhea" id="RHEA:24409"/>
    </physiologicalReaction>
</comment>
<comment type="subunit">
    <text evidence="2">Interacts with FASN. Interacts with SDHA. Interacts with ATF6, EIF2AK3 and ERN1.</text>
</comment>
<comment type="subcellular location">
    <subcellularLocation>
        <location evidence="4">Cytoplasm</location>
    </subcellularLocation>
    <subcellularLocation>
        <location evidence="4">Nucleus</location>
    </subcellularLocation>
    <subcellularLocation>
        <location evidence="2">Endoplasmic reticulum</location>
    </subcellularLocation>
    <subcellularLocation>
        <location evidence="2">Peroxisome</location>
    </subcellularLocation>
    <text evidence="2">Upon stimulation of the pattern-recognition receptor (PRR) NOD2, localizes to the endoplasmic reticulum.</text>
</comment>
<comment type="tissue specificity">
    <text evidence="4">Predominantly expressed in myeloid cells (PubMed:30510070). Highly expressed in primary macrophages and dendritic cells sorted from the peritoneum or spleen, respectively (at protein level) (PubMed:30510070).</text>
</comment>
<comment type="PTM">
    <text evidence="2">Phosphorylated on tyrosine residues.</text>
</comment>
<comment type="disruption phenotype">
    <text evidence="4">No visible phenotype in normal conditions (PubMed:30510070). Mice show increased inflammatory response in mouse models of arthritis and inflammation (PubMed:30510070).</text>
</comment>
<comment type="similarity">
    <text evidence="7">Belongs to the purine nucleoside phosphorylase YfiH/LACC1 family.</text>
</comment>
<protein>
    <recommendedName>
        <fullName evidence="7">Purine nucleoside phosphorylase LACC1</fullName>
        <ecNumber evidence="2">2.4.2.1</ecNumber>
    </recommendedName>
    <alternativeName>
        <fullName evidence="7">Adenosine deaminase LACC1</fullName>
        <ecNumber evidence="2">3.5.4.4</ecNumber>
    </alternativeName>
    <alternativeName>
        <fullName evidence="6">Fatty acid metabolism-immunity nexus</fullName>
    </alternativeName>
    <alternativeName>
        <fullName evidence="7">Guanosine phosphorylase LACC1</fullName>
    </alternativeName>
    <alternativeName>
        <fullName evidence="7">Laccase domain-containing protein 1</fullName>
    </alternativeName>
    <alternativeName>
        <fullName evidence="7">S-methyl-5'-thioadenosine phosphorylase LACC1</fullName>
        <ecNumber evidence="2">2.4.2.28</ecNumber>
    </alternativeName>
</protein>
<proteinExistence type="evidence at protein level"/>
<gene>
    <name evidence="8" type="primary">Lacc1</name>
    <name evidence="6" type="synonym">Famin</name>
</gene>
<evidence type="ECO:0000250" key="1">
    <source>
        <dbReference type="UniProtKB" id="P84138"/>
    </source>
</evidence>
<evidence type="ECO:0000250" key="2">
    <source>
        <dbReference type="UniProtKB" id="Q8IV20"/>
    </source>
</evidence>
<evidence type="ECO:0000269" key="3">
    <source>
    </source>
</evidence>
<evidence type="ECO:0000269" key="4">
    <source>
    </source>
</evidence>
<evidence type="ECO:0000269" key="5">
    <source>
    </source>
</evidence>
<evidence type="ECO:0000303" key="6">
    <source>
    </source>
</evidence>
<evidence type="ECO:0000305" key="7"/>
<evidence type="ECO:0000312" key="8">
    <source>
        <dbReference type="MGI" id="MGI:2445077"/>
    </source>
</evidence>
<accession>Q8BZT9</accession>
<accession>Q14AQ3</accession>
<accession>Q3U600</accession>
<dbReference type="EC" id="2.4.2.1" evidence="2"/>
<dbReference type="EC" id="3.5.4.4" evidence="2"/>
<dbReference type="EC" id="2.4.2.28" evidence="2"/>
<dbReference type="EMBL" id="AK033565">
    <property type="protein sequence ID" value="BAC28363.1"/>
    <property type="molecule type" value="mRNA"/>
</dbReference>
<dbReference type="EMBL" id="AK152154">
    <property type="protein sequence ID" value="BAE30989.1"/>
    <property type="molecule type" value="mRNA"/>
</dbReference>
<dbReference type="EMBL" id="AK153349">
    <property type="protein sequence ID" value="BAE31925.1"/>
    <property type="molecule type" value="mRNA"/>
</dbReference>
<dbReference type="EMBL" id="BC116748">
    <property type="protein sequence ID" value="AAI16749.1"/>
    <property type="molecule type" value="mRNA"/>
</dbReference>
<dbReference type="EMBL" id="BC119140">
    <property type="protein sequence ID" value="AAI19141.1"/>
    <property type="molecule type" value="mRNA"/>
</dbReference>
<dbReference type="CCDS" id="CCDS27287.1"/>
<dbReference type="RefSeq" id="NP_766076.1">
    <property type="nucleotide sequence ID" value="NM_172488.2"/>
</dbReference>
<dbReference type="SMR" id="Q8BZT9"/>
<dbReference type="BioGRID" id="229184">
    <property type="interactions" value="1"/>
</dbReference>
<dbReference type="FunCoup" id="Q8BZT9">
    <property type="interactions" value="791"/>
</dbReference>
<dbReference type="STRING" id="10090.ENSMUSP00000059173"/>
<dbReference type="GlyGen" id="Q8BZT9">
    <property type="glycosylation" value="1 site, 1 O-linked glycan (1 site)"/>
</dbReference>
<dbReference type="PhosphoSitePlus" id="Q8BZT9"/>
<dbReference type="PaxDb" id="10090-ENSMUSP00000059173"/>
<dbReference type="ProteomicsDB" id="290006"/>
<dbReference type="Pumba" id="Q8BZT9"/>
<dbReference type="DNASU" id="210808"/>
<dbReference type="Ensembl" id="ENSMUST00000062789.15">
    <property type="protein sequence ID" value="ENSMUSP00000059173.9"/>
    <property type="gene ID" value="ENSMUSG00000044350.15"/>
</dbReference>
<dbReference type="GeneID" id="210808"/>
<dbReference type="KEGG" id="mmu:210808"/>
<dbReference type="UCSC" id="uc007urq.1">
    <property type="organism name" value="mouse"/>
</dbReference>
<dbReference type="AGR" id="MGI:2445077"/>
<dbReference type="CTD" id="144811"/>
<dbReference type="MGI" id="MGI:2445077">
    <property type="gene designation" value="Lacc1"/>
</dbReference>
<dbReference type="VEuPathDB" id="HostDB:ENSMUSG00000044350"/>
<dbReference type="eggNOG" id="ENOG502QUMA">
    <property type="taxonomic scope" value="Eukaryota"/>
</dbReference>
<dbReference type="GeneTree" id="ENSGT00390000000693"/>
<dbReference type="HOGENOM" id="CLU_637703_0_0_1"/>
<dbReference type="InParanoid" id="Q8BZT9"/>
<dbReference type="OMA" id="HDNCELE"/>
<dbReference type="OrthoDB" id="10055554at2759"/>
<dbReference type="PhylomeDB" id="Q8BZT9"/>
<dbReference type="TreeFam" id="TF328389"/>
<dbReference type="BioGRID-ORCS" id="210808">
    <property type="hits" value="1 hit in 76 CRISPR screens"/>
</dbReference>
<dbReference type="ChiTaRS" id="Lacc1">
    <property type="organism name" value="mouse"/>
</dbReference>
<dbReference type="PRO" id="PR:Q8BZT9"/>
<dbReference type="Proteomes" id="UP000000589">
    <property type="component" value="Chromosome 14"/>
</dbReference>
<dbReference type="RNAct" id="Q8BZT9">
    <property type="molecule type" value="protein"/>
</dbReference>
<dbReference type="Bgee" id="ENSMUSG00000044350">
    <property type="expression patterns" value="Expressed in lens of camera-type eye and 127 other cell types or tissues"/>
</dbReference>
<dbReference type="ExpressionAtlas" id="Q8BZT9">
    <property type="expression patterns" value="baseline and differential"/>
</dbReference>
<dbReference type="GO" id="GO:0005737">
    <property type="term" value="C:cytoplasm"/>
    <property type="evidence" value="ECO:0000314"/>
    <property type="project" value="UniProtKB"/>
</dbReference>
<dbReference type="GO" id="GO:0005783">
    <property type="term" value="C:endoplasmic reticulum"/>
    <property type="evidence" value="ECO:0000250"/>
    <property type="project" value="UniProtKB"/>
</dbReference>
<dbReference type="GO" id="GO:0005634">
    <property type="term" value="C:nucleus"/>
    <property type="evidence" value="ECO:0000314"/>
    <property type="project" value="UniProtKB"/>
</dbReference>
<dbReference type="GO" id="GO:0005777">
    <property type="term" value="C:peroxisome"/>
    <property type="evidence" value="ECO:0000250"/>
    <property type="project" value="UniProtKB"/>
</dbReference>
<dbReference type="GO" id="GO:0004000">
    <property type="term" value="F:adenosine deaminase activity"/>
    <property type="evidence" value="ECO:0000250"/>
    <property type="project" value="UniProtKB"/>
</dbReference>
<dbReference type="GO" id="GO:0047975">
    <property type="term" value="F:guanosine phosphorylase activity"/>
    <property type="evidence" value="ECO:0000250"/>
    <property type="project" value="UniProtKB"/>
</dbReference>
<dbReference type="GO" id="GO:0046872">
    <property type="term" value="F:metal ion binding"/>
    <property type="evidence" value="ECO:0007669"/>
    <property type="project" value="UniProtKB-KW"/>
</dbReference>
<dbReference type="GO" id="GO:0004731">
    <property type="term" value="F:purine-nucleoside phosphorylase activity"/>
    <property type="evidence" value="ECO:0000250"/>
    <property type="project" value="UniProtKB"/>
</dbReference>
<dbReference type="GO" id="GO:0017061">
    <property type="term" value="F:S-methyl-5-thioadenosine phosphorylase activity"/>
    <property type="evidence" value="ECO:0000250"/>
    <property type="project" value="UniProtKB"/>
</dbReference>
<dbReference type="GO" id="GO:0006954">
    <property type="term" value="P:inflammatory response"/>
    <property type="evidence" value="ECO:0007669"/>
    <property type="project" value="UniProtKB-KW"/>
</dbReference>
<dbReference type="GO" id="GO:0045087">
    <property type="term" value="P:innate immune response"/>
    <property type="evidence" value="ECO:0007669"/>
    <property type="project" value="UniProtKB-KW"/>
</dbReference>
<dbReference type="GO" id="GO:0070431">
    <property type="term" value="P:nucleotide-binding oligomerization domain containing 2 signaling pathway"/>
    <property type="evidence" value="ECO:0007669"/>
    <property type="project" value="Ensembl"/>
</dbReference>
<dbReference type="GO" id="GO:0002221">
    <property type="term" value="P:pattern recognition receptor signaling pathway"/>
    <property type="evidence" value="ECO:0000250"/>
    <property type="project" value="UniProtKB"/>
</dbReference>
<dbReference type="GO" id="GO:0002720">
    <property type="term" value="P:positive regulation of cytokine production involved in immune response"/>
    <property type="evidence" value="ECO:0007669"/>
    <property type="project" value="Ensembl"/>
</dbReference>
<dbReference type="GO" id="GO:0030641">
    <property type="term" value="P:regulation of cellular pH"/>
    <property type="evidence" value="ECO:0000250"/>
    <property type="project" value="UniProtKB"/>
</dbReference>
<dbReference type="GO" id="GO:0050727">
    <property type="term" value="P:regulation of inflammatory response"/>
    <property type="evidence" value="ECO:0000315"/>
    <property type="project" value="UniProtKB"/>
</dbReference>
<dbReference type="GO" id="GO:1900542">
    <property type="term" value="P:regulation of purine nucleotide metabolic process"/>
    <property type="evidence" value="ECO:0000315"/>
    <property type="project" value="UniProtKB"/>
</dbReference>
<dbReference type="CDD" id="cd16833">
    <property type="entry name" value="YfiH"/>
    <property type="match status" value="1"/>
</dbReference>
<dbReference type="FunFam" id="3.60.140.10:FF:000002">
    <property type="entry name" value="Laccase (multicopper oxidoreductase) domain-containing 1"/>
    <property type="match status" value="1"/>
</dbReference>
<dbReference type="Gene3D" id="3.60.140.10">
    <property type="entry name" value="CNF1/YfiH-like putative cysteine hydrolases"/>
    <property type="match status" value="1"/>
</dbReference>
<dbReference type="InterPro" id="IPR003730">
    <property type="entry name" value="Cu_polyphenol_OxRdtase"/>
</dbReference>
<dbReference type="InterPro" id="IPR038371">
    <property type="entry name" value="Cu_polyphenol_OxRdtase_sf"/>
</dbReference>
<dbReference type="InterPro" id="IPR011324">
    <property type="entry name" value="Cytotoxic_necrot_fac-like_cat"/>
</dbReference>
<dbReference type="PANTHER" id="PTHR30616:SF2">
    <property type="entry name" value="PURINE NUCLEOSIDE PHOSPHORYLASE LACC1"/>
    <property type="match status" value="1"/>
</dbReference>
<dbReference type="PANTHER" id="PTHR30616">
    <property type="entry name" value="UNCHARACTERIZED PROTEIN YFIH"/>
    <property type="match status" value="1"/>
</dbReference>
<dbReference type="Pfam" id="PF02578">
    <property type="entry name" value="Cu-oxidase_4"/>
    <property type="match status" value="1"/>
</dbReference>
<dbReference type="SUPFAM" id="SSF64438">
    <property type="entry name" value="CNF1/YfiH-like putative cysteine hydrolases"/>
    <property type="match status" value="1"/>
</dbReference>
<feature type="chain" id="PRO_0000163188" description="Purine nucleoside phosphorylase LACC1">
    <location>
        <begin position="1"/>
        <end position="430"/>
    </location>
</feature>
<feature type="binding site" evidence="1">
    <location>
        <position position="250"/>
    </location>
    <ligand>
        <name>Zn(2+)</name>
        <dbReference type="ChEBI" id="CHEBI:29105"/>
        <note>catalytic</note>
    </ligand>
</feature>
<feature type="binding site" evidence="1">
    <location>
        <position position="284"/>
    </location>
    <ligand>
        <name>Zn(2+)</name>
        <dbReference type="ChEBI" id="CHEBI:29105"/>
        <note>catalytic</note>
    </ligand>
</feature>
<feature type="binding site" evidence="1">
    <location>
        <position position="301"/>
    </location>
    <ligand>
        <name>Zn(2+)</name>
        <dbReference type="ChEBI" id="CHEBI:29105"/>
        <note>catalytic</note>
    </ligand>
</feature>
<feature type="modified residue" description="N6-acetyllysine" evidence="2">
    <location>
        <position position="247"/>
    </location>
</feature>
<feature type="mutagenesis site" description="Reduced function." evidence="3">
    <original>V</original>
    <variation>I</variation>
    <location>
        <position position="254"/>
    </location>
</feature>
<feature type="mutagenesis site" description="Complete loss of function." evidence="3">
    <original>C</original>
    <variation>R</variation>
    <location>
        <position position="284"/>
    </location>
</feature>
<keyword id="KW-0007">Acetylation</keyword>
<keyword id="KW-0963">Cytoplasm</keyword>
<keyword id="KW-0256">Endoplasmic reticulum</keyword>
<keyword id="KW-0378">Hydrolase</keyword>
<keyword id="KW-0391">Immunity</keyword>
<keyword id="KW-0395">Inflammatory response</keyword>
<keyword id="KW-0399">Innate immunity</keyword>
<keyword id="KW-0479">Metal-binding</keyword>
<keyword id="KW-0539">Nucleus</keyword>
<keyword id="KW-0576">Peroxisome</keyword>
<keyword id="KW-0597">Phosphoprotein</keyword>
<keyword id="KW-1185">Reference proteome</keyword>
<keyword id="KW-0808">Transferase</keyword>
<keyword id="KW-0862">Zinc</keyword>
<reference key="1">
    <citation type="journal article" date="2005" name="Science">
        <title>The transcriptional landscape of the mammalian genome.</title>
        <authorList>
            <person name="Carninci P."/>
            <person name="Kasukawa T."/>
            <person name="Katayama S."/>
            <person name="Gough J."/>
            <person name="Frith M.C."/>
            <person name="Maeda N."/>
            <person name="Oyama R."/>
            <person name="Ravasi T."/>
            <person name="Lenhard B."/>
            <person name="Wells C."/>
            <person name="Kodzius R."/>
            <person name="Shimokawa K."/>
            <person name="Bajic V.B."/>
            <person name="Brenner S.E."/>
            <person name="Batalov S."/>
            <person name="Forrest A.R."/>
            <person name="Zavolan M."/>
            <person name="Davis M.J."/>
            <person name="Wilming L.G."/>
            <person name="Aidinis V."/>
            <person name="Allen J.E."/>
            <person name="Ambesi-Impiombato A."/>
            <person name="Apweiler R."/>
            <person name="Aturaliya R.N."/>
            <person name="Bailey T.L."/>
            <person name="Bansal M."/>
            <person name="Baxter L."/>
            <person name="Beisel K.W."/>
            <person name="Bersano T."/>
            <person name="Bono H."/>
            <person name="Chalk A.M."/>
            <person name="Chiu K.P."/>
            <person name="Choudhary V."/>
            <person name="Christoffels A."/>
            <person name="Clutterbuck D.R."/>
            <person name="Crowe M.L."/>
            <person name="Dalla E."/>
            <person name="Dalrymple B.P."/>
            <person name="de Bono B."/>
            <person name="Della Gatta G."/>
            <person name="di Bernardo D."/>
            <person name="Down T."/>
            <person name="Engstrom P."/>
            <person name="Fagiolini M."/>
            <person name="Faulkner G."/>
            <person name="Fletcher C.F."/>
            <person name="Fukushima T."/>
            <person name="Furuno M."/>
            <person name="Futaki S."/>
            <person name="Gariboldi M."/>
            <person name="Georgii-Hemming P."/>
            <person name="Gingeras T.R."/>
            <person name="Gojobori T."/>
            <person name="Green R.E."/>
            <person name="Gustincich S."/>
            <person name="Harbers M."/>
            <person name="Hayashi Y."/>
            <person name="Hensch T.K."/>
            <person name="Hirokawa N."/>
            <person name="Hill D."/>
            <person name="Huminiecki L."/>
            <person name="Iacono M."/>
            <person name="Ikeo K."/>
            <person name="Iwama A."/>
            <person name="Ishikawa T."/>
            <person name="Jakt M."/>
            <person name="Kanapin A."/>
            <person name="Katoh M."/>
            <person name="Kawasawa Y."/>
            <person name="Kelso J."/>
            <person name="Kitamura H."/>
            <person name="Kitano H."/>
            <person name="Kollias G."/>
            <person name="Krishnan S.P."/>
            <person name="Kruger A."/>
            <person name="Kummerfeld S.K."/>
            <person name="Kurochkin I.V."/>
            <person name="Lareau L.F."/>
            <person name="Lazarevic D."/>
            <person name="Lipovich L."/>
            <person name="Liu J."/>
            <person name="Liuni S."/>
            <person name="McWilliam S."/>
            <person name="Madan Babu M."/>
            <person name="Madera M."/>
            <person name="Marchionni L."/>
            <person name="Matsuda H."/>
            <person name="Matsuzawa S."/>
            <person name="Miki H."/>
            <person name="Mignone F."/>
            <person name="Miyake S."/>
            <person name="Morris K."/>
            <person name="Mottagui-Tabar S."/>
            <person name="Mulder N."/>
            <person name="Nakano N."/>
            <person name="Nakauchi H."/>
            <person name="Ng P."/>
            <person name="Nilsson R."/>
            <person name="Nishiguchi S."/>
            <person name="Nishikawa S."/>
            <person name="Nori F."/>
            <person name="Ohara O."/>
            <person name="Okazaki Y."/>
            <person name="Orlando V."/>
            <person name="Pang K.C."/>
            <person name="Pavan W.J."/>
            <person name="Pavesi G."/>
            <person name="Pesole G."/>
            <person name="Petrovsky N."/>
            <person name="Piazza S."/>
            <person name="Reed J."/>
            <person name="Reid J.F."/>
            <person name="Ring B.Z."/>
            <person name="Ringwald M."/>
            <person name="Rost B."/>
            <person name="Ruan Y."/>
            <person name="Salzberg S.L."/>
            <person name="Sandelin A."/>
            <person name="Schneider C."/>
            <person name="Schoenbach C."/>
            <person name="Sekiguchi K."/>
            <person name="Semple C.A."/>
            <person name="Seno S."/>
            <person name="Sessa L."/>
            <person name="Sheng Y."/>
            <person name="Shibata Y."/>
            <person name="Shimada H."/>
            <person name="Shimada K."/>
            <person name="Silva D."/>
            <person name="Sinclair B."/>
            <person name="Sperling S."/>
            <person name="Stupka E."/>
            <person name="Sugiura K."/>
            <person name="Sultana R."/>
            <person name="Takenaka Y."/>
            <person name="Taki K."/>
            <person name="Tammoja K."/>
            <person name="Tan S.L."/>
            <person name="Tang S."/>
            <person name="Taylor M.S."/>
            <person name="Tegner J."/>
            <person name="Teichmann S.A."/>
            <person name="Ueda H.R."/>
            <person name="van Nimwegen E."/>
            <person name="Verardo R."/>
            <person name="Wei C.L."/>
            <person name="Yagi K."/>
            <person name="Yamanishi H."/>
            <person name="Zabarovsky E."/>
            <person name="Zhu S."/>
            <person name="Zimmer A."/>
            <person name="Hide W."/>
            <person name="Bult C."/>
            <person name="Grimmond S.M."/>
            <person name="Teasdale R.D."/>
            <person name="Liu E.T."/>
            <person name="Brusic V."/>
            <person name="Quackenbush J."/>
            <person name="Wahlestedt C."/>
            <person name="Mattick J.S."/>
            <person name="Hume D.A."/>
            <person name="Kai C."/>
            <person name="Sasaki D."/>
            <person name="Tomaru Y."/>
            <person name="Fukuda S."/>
            <person name="Kanamori-Katayama M."/>
            <person name="Suzuki M."/>
            <person name="Aoki J."/>
            <person name="Arakawa T."/>
            <person name="Iida J."/>
            <person name="Imamura K."/>
            <person name="Itoh M."/>
            <person name="Kato T."/>
            <person name="Kawaji H."/>
            <person name="Kawagashira N."/>
            <person name="Kawashima T."/>
            <person name="Kojima M."/>
            <person name="Kondo S."/>
            <person name="Konno H."/>
            <person name="Nakano K."/>
            <person name="Ninomiya N."/>
            <person name="Nishio T."/>
            <person name="Okada M."/>
            <person name="Plessy C."/>
            <person name="Shibata K."/>
            <person name="Shiraki T."/>
            <person name="Suzuki S."/>
            <person name="Tagami M."/>
            <person name="Waki K."/>
            <person name="Watahiki A."/>
            <person name="Okamura-Oho Y."/>
            <person name="Suzuki H."/>
            <person name="Kawai J."/>
            <person name="Hayashizaki Y."/>
        </authorList>
    </citation>
    <scope>NUCLEOTIDE SEQUENCE [LARGE SCALE MRNA]</scope>
    <source>
        <strain>C57BL/6J</strain>
        <tissue>Bone marrow</tissue>
        <tissue>Colon</tissue>
    </source>
</reference>
<reference key="2">
    <citation type="journal article" date="2004" name="Genome Res.">
        <title>The status, quality, and expansion of the NIH full-length cDNA project: the Mammalian Gene Collection (MGC).</title>
        <authorList>
            <consortium name="The MGC Project Team"/>
        </authorList>
    </citation>
    <scope>NUCLEOTIDE SEQUENCE [LARGE SCALE MRNA]</scope>
    <source>
        <tissue>Brain</tissue>
    </source>
</reference>
<reference key="3">
    <citation type="journal article" date="2016" name="Nat. Immunol.">
        <title>C13orf31 (FAMIN) is a central regulator of immunometabolic function.</title>
        <authorList>
            <person name="Cader M.Z."/>
            <person name="Boroviak K."/>
            <person name="Zhang Q."/>
            <person name="Assadi G."/>
            <person name="Kempster S.L."/>
            <person name="Sewell G.W."/>
            <person name="Saveljeva S."/>
            <person name="Ashcroft J.W."/>
            <person name="Clare S."/>
            <person name="Mukhopadhyay S."/>
            <person name="Brown K.P."/>
            <person name="Tschurtschenthaler M."/>
            <person name="Raine T."/>
            <person name="Doe B."/>
            <person name="Chilvers E.R."/>
            <person name="Griffin J.L."/>
            <person name="Kaneider N.C."/>
            <person name="Floto R.A."/>
            <person name="D'Amato M."/>
            <person name="Bradley A."/>
            <person name="Wakelam M.J."/>
            <person name="Dougan G."/>
            <person name="Kaser A."/>
        </authorList>
    </citation>
    <scope>FUNCTION</scope>
    <scope>MUTAGENESIS OF VAL-254 AND CYS-284</scope>
</reference>
<reference key="4">
    <citation type="journal article" date="2019" name="J. Immunol.">
        <title>LACC1 regulates TNF and IL-17 in mouse models of arthritis and inflammation.</title>
        <authorList>
            <person name="Skon-Hegg C."/>
            <person name="Zhang J."/>
            <person name="Wu X."/>
            <person name="Sagolla M."/>
            <person name="Ota N."/>
            <person name="Wuster A."/>
            <person name="Tom J."/>
            <person name="Doran E."/>
            <person name="Ramamoorthi N."/>
            <person name="Caplazi P."/>
            <person name="Monroe J."/>
            <person name="Lee W.P."/>
            <person name="Behrens T.W."/>
        </authorList>
    </citation>
    <scope>SUBCELLULAR LOCATION</scope>
    <scope>TISSUE SPECIFICITY</scope>
    <scope>DISRUPTION PHENOTYPE</scope>
</reference>
<reference key="5">
    <citation type="journal article" date="2020" name="Cell">
        <title>FAMIN is a multifunctional purine enzyme enabling the purine nucleotide cycle.</title>
        <authorList>
            <person name="Cader M.Z."/>
            <person name="de Almeida Rodrigues R.P."/>
            <person name="West J.A."/>
            <person name="Sewell G.W."/>
            <person name="Md-Ibrahim M.N."/>
            <person name="Reikine S."/>
            <person name="Sirago G."/>
            <person name="Unger L.W."/>
            <person name="Inglesias-Romero A.B."/>
            <person name="Ramshorn K."/>
            <person name="Haag L.M."/>
            <person name="Saveljeva S."/>
            <person name="Ebel J.F."/>
            <person name="Rosenstiel P."/>
            <person name="Kaneider N.C."/>
            <person name="Lee J.C."/>
            <person name="Lawley T.D."/>
            <person name="Bradley A."/>
            <person name="Dougan G."/>
            <person name="Modis Y."/>
            <person name="Griffin J.L."/>
            <person name="Kaser A."/>
        </authorList>
    </citation>
    <scope>FUNCTION</scope>
</reference>